<sequence length="320" mass="36697">MGRKRKHSETEAPAPVKKSDEPAPDRPKRTLLGWKDKSEGEAEKAKALTSSGFKNKEKVLVTCSRRISFRYRSLMLNIVSLLPHCKKDSKVEAKSSKGATLNELIELKNSNSCLFFECRKHKDLYMWMVKSPNGPSVKFLVKAVHAMEEMKLTGNHLKGSRPLLTFSSNFDKDAHWKLLKEMLTQVFGIPKEHRKSKPYHDHVFVFSIVDEHIWFRNYQISVPHNESDKIAKGGLDKMTLIEVGPRFCLNPIKIFAGSFGGPTLYENPLYVSPNQIRALEKRNKAGKFAKKIKAKTRKKMHELSNPLEPDEFADMWKDDE</sequence>
<accession>Q9C928</accession>
<feature type="chain" id="PRO_0000438374" description="Ribosome biogenesis protein BRX1 homolog 2">
    <location>
        <begin position="1"/>
        <end position="320"/>
    </location>
</feature>
<feature type="domain" description="Brix" evidence="1">
    <location>
        <begin position="57"/>
        <end position="260"/>
    </location>
</feature>
<feature type="region of interest" description="Disordered" evidence="2">
    <location>
        <begin position="1"/>
        <end position="40"/>
    </location>
</feature>
<feature type="region of interest" description="Disordered" evidence="2">
    <location>
        <begin position="297"/>
        <end position="320"/>
    </location>
</feature>
<feature type="compositionally biased region" description="Basic and acidic residues" evidence="2">
    <location>
        <begin position="17"/>
        <end position="40"/>
    </location>
</feature>
<feature type="compositionally biased region" description="Acidic residues" evidence="2">
    <location>
        <begin position="308"/>
        <end position="320"/>
    </location>
</feature>
<evidence type="ECO:0000255" key="1">
    <source>
        <dbReference type="PROSITE-ProRule" id="PRU00034"/>
    </source>
</evidence>
<evidence type="ECO:0000256" key="2">
    <source>
        <dbReference type="SAM" id="MobiDB-lite"/>
    </source>
</evidence>
<evidence type="ECO:0000269" key="3">
    <source>
    </source>
</evidence>
<evidence type="ECO:0000303" key="4">
    <source>
    </source>
</evidence>
<evidence type="ECO:0000305" key="5"/>
<evidence type="ECO:0000312" key="6">
    <source>
        <dbReference type="Araport" id="AT1G52930"/>
    </source>
</evidence>
<evidence type="ECO:0000312" key="7">
    <source>
        <dbReference type="EMBL" id="AAG52272.1"/>
    </source>
</evidence>
<name>BRX12_ARATH</name>
<comment type="function">
    <text evidence="3">Involved in pre-rRNA processing and required for biogenesis of the large (60S) ribosomal subunit. Required for proper development.</text>
</comment>
<comment type="subcellular location">
    <subcellularLocation>
        <location evidence="3">Nucleus</location>
        <location evidence="3">Nucleolus</location>
    </subcellularLocation>
    <text evidence="3">Associates with 60S pre-ribosomes.</text>
</comment>
<comment type="tissue specificity">
    <text evidence="3">Expressed in roots, rosette leaves, stems, flowers, siliques and seeds.</text>
</comment>
<comment type="disruption phenotype">
    <text evidence="3">Delayed growth rate.</text>
</comment>
<comment type="similarity">
    <text evidence="5">Belongs to the BRX1 family.</text>
</comment>
<keyword id="KW-0539">Nucleus</keyword>
<keyword id="KW-1185">Reference proteome</keyword>
<keyword id="KW-0690">Ribosome biogenesis</keyword>
<keyword id="KW-0698">rRNA processing</keyword>
<dbReference type="EMBL" id="AC019018">
    <property type="protein sequence ID" value="AAG52272.1"/>
    <property type="molecule type" value="Genomic_DNA"/>
</dbReference>
<dbReference type="EMBL" id="CP002684">
    <property type="protein sequence ID" value="AEE32869.1"/>
    <property type="molecule type" value="Genomic_DNA"/>
</dbReference>
<dbReference type="EMBL" id="AF370290">
    <property type="protein sequence ID" value="AAK44105.1"/>
    <property type="molecule type" value="mRNA"/>
</dbReference>
<dbReference type="EMBL" id="AY063038">
    <property type="protein sequence ID" value="AAL34212.1"/>
    <property type="molecule type" value="mRNA"/>
</dbReference>
<dbReference type="PIR" id="F96570">
    <property type="entry name" value="F96570"/>
</dbReference>
<dbReference type="RefSeq" id="NP_564618.1">
    <property type="nucleotide sequence ID" value="NM_104171.3"/>
</dbReference>
<dbReference type="SMR" id="Q9C928"/>
<dbReference type="FunCoup" id="Q9C928">
    <property type="interactions" value="3672"/>
</dbReference>
<dbReference type="STRING" id="3702.Q9C928"/>
<dbReference type="iPTMnet" id="Q9C928"/>
<dbReference type="PaxDb" id="3702-AT1G52930.1"/>
<dbReference type="ProteomicsDB" id="240676"/>
<dbReference type="EnsemblPlants" id="AT1G52930.1">
    <property type="protein sequence ID" value="AT1G52930.1"/>
    <property type="gene ID" value="AT1G52930"/>
</dbReference>
<dbReference type="GeneID" id="841726"/>
<dbReference type="Gramene" id="AT1G52930.1">
    <property type="protein sequence ID" value="AT1G52930.1"/>
    <property type="gene ID" value="AT1G52930"/>
</dbReference>
<dbReference type="KEGG" id="ath:AT1G52930"/>
<dbReference type="Araport" id="AT1G52930"/>
<dbReference type="TAIR" id="AT1G52930">
    <property type="gene designation" value="ATBRX1-2"/>
</dbReference>
<dbReference type="eggNOG" id="KOG2971">
    <property type="taxonomic scope" value="Eukaryota"/>
</dbReference>
<dbReference type="HOGENOM" id="CLU_048373_2_0_1"/>
<dbReference type="InParanoid" id="Q9C928"/>
<dbReference type="OMA" id="YMWLANA"/>
<dbReference type="OrthoDB" id="1638493at2759"/>
<dbReference type="PhylomeDB" id="Q9C928"/>
<dbReference type="CD-CODE" id="4299E36E">
    <property type="entry name" value="Nucleolus"/>
</dbReference>
<dbReference type="PRO" id="PR:Q9C928"/>
<dbReference type="Proteomes" id="UP000006548">
    <property type="component" value="Chromosome 1"/>
</dbReference>
<dbReference type="ExpressionAtlas" id="Q9C928">
    <property type="expression patterns" value="baseline and differential"/>
</dbReference>
<dbReference type="GO" id="GO:0005730">
    <property type="term" value="C:nucleolus"/>
    <property type="evidence" value="ECO:0000314"/>
    <property type="project" value="TAIR"/>
</dbReference>
<dbReference type="GO" id="GO:0019843">
    <property type="term" value="F:rRNA binding"/>
    <property type="evidence" value="ECO:0007669"/>
    <property type="project" value="InterPro"/>
</dbReference>
<dbReference type="GO" id="GO:0000027">
    <property type="term" value="P:ribosomal large subunit assembly"/>
    <property type="evidence" value="ECO:0000315"/>
    <property type="project" value="TAIR"/>
</dbReference>
<dbReference type="GO" id="GO:0006364">
    <property type="term" value="P:rRNA processing"/>
    <property type="evidence" value="ECO:0000315"/>
    <property type="project" value="TAIR"/>
</dbReference>
<dbReference type="FunFam" id="3.40.50.10480:FF:000009">
    <property type="entry name" value="Ribosome biogenesis protein, putative"/>
    <property type="match status" value="1"/>
</dbReference>
<dbReference type="Gene3D" id="3.40.50.10480">
    <property type="entry name" value="Probable brix-domain ribosomal biogenesis protein"/>
    <property type="match status" value="1"/>
</dbReference>
<dbReference type="InterPro" id="IPR007109">
    <property type="entry name" value="Brix"/>
</dbReference>
<dbReference type="InterPro" id="IPR026532">
    <property type="entry name" value="BRX1"/>
</dbReference>
<dbReference type="PANTHER" id="PTHR13634">
    <property type="entry name" value="RIBOSOME BIOGENESIS PROTEIN BRIX"/>
    <property type="match status" value="1"/>
</dbReference>
<dbReference type="PANTHER" id="PTHR13634:SF3">
    <property type="entry name" value="RIBOSOME BIOGENESIS PROTEIN BRX1 HOMOLOG 2"/>
    <property type="match status" value="1"/>
</dbReference>
<dbReference type="Pfam" id="PF04427">
    <property type="entry name" value="Brix"/>
    <property type="match status" value="1"/>
</dbReference>
<dbReference type="SMART" id="SM00879">
    <property type="entry name" value="Brix"/>
    <property type="match status" value="1"/>
</dbReference>
<dbReference type="SUPFAM" id="SSF52954">
    <property type="entry name" value="Class II aaRS ABD-related"/>
    <property type="match status" value="1"/>
</dbReference>
<dbReference type="PROSITE" id="PS50833">
    <property type="entry name" value="BRIX"/>
    <property type="match status" value="1"/>
</dbReference>
<reference key="1">
    <citation type="journal article" date="2000" name="Nature">
        <title>Sequence and analysis of chromosome 1 of the plant Arabidopsis thaliana.</title>
        <authorList>
            <person name="Theologis A."/>
            <person name="Ecker J.R."/>
            <person name="Palm C.J."/>
            <person name="Federspiel N.A."/>
            <person name="Kaul S."/>
            <person name="White O."/>
            <person name="Alonso J."/>
            <person name="Altafi H."/>
            <person name="Araujo R."/>
            <person name="Bowman C.L."/>
            <person name="Brooks S.Y."/>
            <person name="Buehler E."/>
            <person name="Chan A."/>
            <person name="Chao Q."/>
            <person name="Chen H."/>
            <person name="Cheuk R.F."/>
            <person name="Chin C.W."/>
            <person name="Chung M.K."/>
            <person name="Conn L."/>
            <person name="Conway A.B."/>
            <person name="Conway A.R."/>
            <person name="Creasy T.H."/>
            <person name="Dewar K."/>
            <person name="Dunn P."/>
            <person name="Etgu P."/>
            <person name="Feldblyum T.V."/>
            <person name="Feng J.-D."/>
            <person name="Fong B."/>
            <person name="Fujii C.Y."/>
            <person name="Gill J.E."/>
            <person name="Goldsmith A.D."/>
            <person name="Haas B."/>
            <person name="Hansen N.F."/>
            <person name="Hughes B."/>
            <person name="Huizar L."/>
            <person name="Hunter J.L."/>
            <person name="Jenkins J."/>
            <person name="Johnson-Hopson C."/>
            <person name="Khan S."/>
            <person name="Khaykin E."/>
            <person name="Kim C.J."/>
            <person name="Koo H.L."/>
            <person name="Kremenetskaia I."/>
            <person name="Kurtz D.B."/>
            <person name="Kwan A."/>
            <person name="Lam B."/>
            <person name="Langin-Hooper S."/>
            <person name="Lee A."/>
            <person name="Lee J.M."/>
            <person name="Lenz C.A."/>
            <person name="Li J.H."/>
            <person name="Li Y.-P."/>
            <person name="Lin X."/>
            <person name="Liu S.X."/>
            <person name="Liu Z.A."/>
            <person name="Luros J.S."/>
            <person name="Maiti R."/>
            <person name="Marziali A."/>
            <person name="Militscher J."/>
            <person name="Miranda M."/>
            <person name="Nguyen M."/>
            <person name="Nierman W.C."/>
            <person name="Osborne B.I."/>
            <person name="Pai G."/>
            <person name="Peterson J."/>
            <person name="Pham P.K."/>
            <person name="Rizzo M."/>
            <person name="Rooney T."/>
            <person name="Rowley D."/>
            <person name="Sakano H."/>
            <person name="Salzberg S.L."/>
            <person name="Schwartz J.R."/>
            <person name="Shinn P."/>
            <person name="Southwick A.M."/>
            <person name="Sun H."/>
            <person name="Tallon L.J."/>
            <person name="Tambunga G."/>
            <person name="Toriumi M.J."/>
            <person name="Town C.D."/>
            <person name="Utterback T."/>
            <person name="Van Aken S."/>
            <person name="Vaysberg M."/>
            <person name="Vysotskaia V.S."/>
            <person name="Walker M."/>
            <person name="Wu D."/>
            <person name="Yu G."/>
            <person name="Fraser C.M."/>
            <person name="Venter J.C."/>
            <person name="Davis R.W."/>
        </authorList>
    </citation>
    <scope>NUCLEOTIDE SEQUENCE [LARGE SCALE GENOMIC DNA]</scope>
    <source>
        <strain>cv. Columbia</strain>
    </source>
</reference>
<reference key="2">
    <citation type="journal article" date="2017" name="Plant J.">
        <title>Araport11: a complete reannotation of the Arabidopsis thaliana reference genome.</title>
        <authorList>
            <person name="Cheng C.Y."/>
            <person name="Krishnakumar V."/>
            <person name="Chan A.P."/>
            <person name="Thibaud-Nissen F."/>
            <person name="Schobel S."/>
            <person name="Town C.D."/>
        </authorList>
    </citation>
    <scope>GENOME REANNOTATION</scope>
    <source>
        <strain>cv. Columbia</strain>
    </source>
</reference>
<reference key="3">
    <citation type="journal article" date="2003" name="Science">
        <title>Empirical analysis of transcriptional activity in the Arabidopsis genome.</title>
        <authorList>
            <person name="Yamada K."/>
            <person name="Lim J."/>
            <person name="Dale J.M."/>
            <person name="Chen H."/>
            <person name="Shinn P."/>
            <person name="Palm C.J."/>
            <person name="Southwick A.M."/>
            <person name="Wu H.C."/>
            <person name="Kim C.J."/>
            <person name="Nguyen M."/>
            <person name="Pham P.K."/>
            <person name="Cheuk R.F."/>
            <person name="Karlin-Newmann G."/>
            <person name="Liu S.X."/>
            <person name="Lam B."/>
            <person name="Sakano H."/>
            <person name="Wu T."/>
            <person name="Yu G."/>
            <person name="Miranda M."/>
            <person name="Quach H.L."/>
            <person name="Tripp M."/>
            <person name="Chang C.H."/>
            <person name="Lee J.M."/>
            <person name="Toriumi M.J."/>
            <person name="Chan M.M."/>
            <person name="Tang C.C."/>
            <person name="Onodera C.S."/>
            <person name="Deng J.M."/>
            <person name="Akiyama K."/>
            <person name="Ansari Y."/>
            <person name="Arakawa T."/>
            <person name="Banh J."/>
            <person name="Banno F."/>
            <person name="Bowser L."/>
            <person name="Brooks S.Y."/>
            <person name="Carninci P."/>
            <person name="Chao Q."/>
            <person name="Choy N."/>
            <person name="Enju A."/>
            <person name="Goldsmith A.D."/>
            <person name="Gurjal M."/>
            <person name="Hansen N.F."/>
            <person name="Hayashizaki Y."/>
            <person name="Johnson-Hopson C."/>
            <person name="Hsuan V.W."/>
            <person name="Iida K."/>
            <person name="Karnes M."/>
            <person name="Khan S."/>
            <person name="Koesema E."/>
            <person name="Ishida J."/>
            <person name="Jiang P.X."/>
            <person name="Jones T."/>
            <person name="Kawai J."/>
            <person name="Kamiya A."/>
            <person name="Meyers C."/>
            <person name="Nakajima M."/>
            <person name="Narusaka M."/>
            <person name="Seki M."/>
            <person name="Sakurai T."/>
            <person name="Satou M."/>
            <person name="Tamse R."/>
            <person name="Vaysberg M."/>
            <person name="Wallender E.K."/>
            <person name="Wong C."/>
            <person name="Yamamura Y."/>
            <person name="Yuan S."/>
            <person name="Shinozaki K."/>
            <person name="Davis R.W."/>
            <person name="Theologis A."/>
            <person name="Ecker J.R."/>
        </authorList>
    </citation>
    <scope>NUCLEOTIDE SEQUENCE [LARGE SCALE MRNA]</scope>
    <source>
        <strain>cv. Columbia</strain>
    </source>
</reference>
<reference key="4">
    <citation type="journal article" date="2015" name="RNA">
        <title>atBRX1-1 and atBRX1-2 are involved in an alternative rRNA processing pathway in Arabidopsis thaliana.</title>
        <authorList>
            <person name="Weis B.L."/>
            <person name="Palm D."/>
            <person name="Missbach S."/>
            <person name="Bohnsack M.T."/>
            <person name="Schleiff E."/>
        </authorList>
    </citation>
    <scope>FUNCTION</scope>
    <scope>SUBCELLULAR LOCATION</scope>
    <scope>TISSUE SPECIFICITY</scope>
    <scope>DISRUPTION PHENOTYPE</scope>
</reference>
<gene>
    <name evidence="4" type="primary">BRIX1-2</name>
    <name evidence="6" type="ordered locus">At1g52930</name>
    <name evidence="7" type="ORF">F14G24.20</name>
</gene>
<proteinExistence type="evidence at transcript level"/>
<protein>
    <recommendedName>
        <fullName evidence="5">Ribosome biogenesis protein BRX1 homolog 2</fullName>
        <shortName evidence="4">AtBRX1-2</shortName>
    </recommendedName>
</protein>
<organism>
    <name type="scientific">Arabidopsis thaliana</name>
    <name type="common">Mouse-ear cress</name>
    <dbReference type="NCBI Taxonomy" id="3702"/>
    <lineage>
        <taxon>Eukaryota</taxon>
        <taxon>Viridiplantae</taxon>
        <taxon>Streptophyta</taxon>
        <taxon>Embryophyta</taxon>
        <taxon>Tracheophyta</taxon>
        <taxon>Spermatophyta</taxon>
        <taxon>Magnoliopsida</taxon>
        <taxon>eudicotyledons</taxon>
        <taxon>Gunneridae</taxon>
        <taxon>Pentapetalae</taxon>
        <taxon>rosids</taxon>
        <taxon>malvids</taxon>
        <taxon>Brassicales</taxon>
        <taxon>Brassicaceae</taxon>
        <taxon>Camelineae</taxon>
        <taxon>Arabidopsis</taxon>
    </lineage>
</organism>